<gene>
    <name type="ordered locus">Os08g0109300</name>
    <name type="ordered locus">LOC_Os08g01770</name>
    <name type="ORF">P0007D08.12</name>
</gene>
<comment type="function">
    <text evidence="1">Catalyzes the reversible transfer of the terminal phosphate group between ATP and AMP. Plays an important role in cellular energy homeostasis and in adenine nucleotide metabolism.</text>
</comment>
<comment type="catalytic activity">
    <reaction evidence="1">
        <text>AMP + ATP = 2 ADP</text>
        <dbReference type="Rhea" id="RHEA:12973"/>
        <dbReference type="ChEBI" id="CHEBI:30616"/>
        <dbReference type="ChEBI" id="CHEBI:456215"/>
        <dbReference type="ChEBI" id="CHEBI:456216"/>
        <dbReference type="EC" id="2.7.4.3"/>
    </reaction>
</comment>
<comment type="subcellular location">
    <subcellularLocation>
        <location evidence="4">Plastid</location>
        <location evidence="4">Chloroplast</location>
    </subcellularLocation>
</comment>
<comment type="similarity">
    <text evidence="4">Belongs to the adenylate kinase family.</text>
</comment>
<dbReference type="EC" id="2.7.4.3"/>
<dbReference type="EMBL" id="AP004584">
    <property type="protein sequence ID" value="BAD09526.1"/>
    <property type="molecule type" value="Genomic_DNA"/>
</dbReference>
<dbReference type="EMBL" id="AP008214">
    <property type="protein sequence ID" value="BAF22724.1"/>
    <property type="molecule type" value="Genomic_DNA"/>
</dbReference>
<dbReference type="EMBL" id="AP014964">
    <property type="protein sequence ID" value="BAT03486.1"/>
    <property type="molecule type" value="Genomic_DNA"/>
</dbReference>
<dbReference type="EMBL" id="AK061825">
    <property type="protein sequence ID" value="BAG88132.1"/>
    <property type="molecule type" value="mRNA"/>
</dbReference>
<dbReference type="EMBL" id="AK066688">
    <property type="protein sequence ID" value="BAG90082.1"/>
    <property type="molecule type" value="mRNA"/>
</dbReference>
<dbReference type="RefSeq" id="XP_015649892.1">
    <property type="nucleotide sequence ID" value="XM_015794406.1"/>
</dbReference>
<dbReference type="SMR" id="Q6ZC69"/>
<dbReference type="FunCoup" id="Q6ZC69">
    <property type="interactions" value="1070"/>
</dbReference>
<dbReference type="STRING" id="39947.Q6ZC69"/>
<dbReference type="PaxDb" id="39947-Q6ZC69"/>
<dbReference type="EnsemblPlants" id="Os08t0109300-01">
    <property type="protein sequence ID" value="Os08t0109300-01"/>
    <property type="gene ID" value="Os08g0109300"/>
</dbReference>
<dbReference type="Gramene" id="Os08t0109300-01">
    <property type="protein sequence ID" value="Os08t0109300-01"/>
    <property type="gene ID" value="Os08g0109300"/>
</dbReference>
<dbReference type="KEGG" id="dosa:Os08g0109300"/>
<dbReference type="eggNOG" id="KOG3078">
    <property type="taxonomic scope" value="Eukaryota"/>
</dbReference>
<dbReference type="HOGENOM" id="CLU_032354_6_1_1"/>
<dbReference type="InParanoid" id="Q6ZC69"/>
<dbReference type="OMA" id="YHEMLDG"/>
<dbReference type="OrthoDB" id="439792at2759"/>
<dbReference type="Proteomes" id="UP000000763">
    <property type="component" value="Chromosome 8"/>
</dbReference>
<dbReference type="Proteomes" id="UP000059680">
    <property type="component" value="Chromosome 8"/>
</dbReference>
<dbReference type="GO" id="GO:0009507">
    <property type="term" value="C:chloroplast"/>
    <property type="evidence" value="ECO:0007669"/>
    <property type="project" value="UniProtKB-SubCell"/>
</dbReference>
<dbReference type="GO" id="GO:0005737">
    <property type="term" value="C:cytoplasm"/>
    <property type="evidence" value="ECO:0000318"/>
    <property type="project" value="GO_Central"/>
</dbReference>
<dbReference type="GO" id="GO:0004017">
    <property type="term" value="F:adenylate kinase activity"/>
    <property type="evidence" value="ECO:0000318"/>
    <property type="project" value="GO_Central"/>
</dbReference>
<dbReference type="GO" id="GO:0005524">
    <property type="term" value="F:ATP binding"/>
    <property type="evidence" value="ECO:0007669"/>
    <property type="project" value="UniProtKB-KW"/>
</dbReference>
<dbReference type="GO" id="GO:0097009">
    <property type="term" value="P:energy homeostasis"/>
    <property type="evidence" value="ECO:0007669"/>
    <property type="project" value="EnsemblPlants"/>
</dbReference>
<dbReference type="CDD" id="cd01428">
    <property type="entry name" value="ADK"/>
    <property type="match status" value="1"/>
</dbReference>
<dbReference type="FunFam" id="3.40.50.300:FF:001694">
    <property type="entry name" value="Adenylate kinase, chloroplastic"/>
    <property type="match status" value="1"/>
</dbReference>
<dbReference type="Gene3D" id="3.40.50.300">
    <property type="entry name" value="P-loop containing nucleotide triphosphate hydrolases"/>
    <property type="match status" value="1"/>
</dbReference>
<dbReference type="HAMAP" id="MF_00235">
    <property type="entry name" value="Adenylate_kinase_Adk"/>
    <property type="match status" value="1"/>
</dbReference>
<dbReference type="InterPro" id="IPR006259">
    <property type="entry name" value="Adenyl_kin_sub"/>
</dbReference>
<dbReference type="InterPro" id="IPR000850">
    <property type="entry name" value="Adenylat/UMP-CMP_kin"/>
</dbReference>
<dbReference type="InterPro" id="IPR033690">
    <property type="entry name" value="Adenylat_kinase_CS"/>
</dbReference>
<dbReference type="InterPro" id="IPR027417">
    <property type="entry name" value="P-loop_NTPase"/>
</dbReference>
<dbReference type="NCBIfam" id="TIGR01351">
    <property type="entry name" value="adk"/>
    <property type="match status" value="1"/>
</dbReference>
<dbReference type="PANTHER" id="PTHR23359">
    <property type="entry name" value="NUCLEOTIDE KINASE"/>
    <property type="match status" value="1"/>
</dbReference>
<dbReference type="Pfam" id="PF00406">
    <property type="entry name" value="ADK"/>
    <property type="match status" value="1"/>
</dbReference>
<dbReference type="PRINTS" id="PR00094">
    <property type="entry name" value="ADENYLTKNASE"/>
</dbReference>
<dbReference type="SUPFAM" id="SSF52540">
    <property type="entry name" value="P-loop containing nucleoside triphosphate hydrolases"/>
    <property type="match status" value="1"/>
</dbReference>
<dbReference type="PROSITE" id="PS00113">
    <property type="entry name" value="ADENYLATE_KINASE"/>
    <property type="match status" value="1"/>
</dbReference>
<proteinExistence type="evidence at transcript level"/>
<evidence type="ECO:0000250" key="1">
    <source>
        <dbReference type="UniProtKB" id="P69441"/>
    </source>
</evidence>
<evidence type="ECO:0000255" key="2"/>
<evidence type="ECO:0000256" key="3">
    <source>
        <dbReference type="SAM" id="MobiDB-lite"/>
    </source>
</evidence>
<evidence type="ECO:0000305" key="4"/>
<protein>
    <recommendedName>
        <fullName>Probable adenylate kinase 2, chloroplastic</fullName>
        <ecNumber>2.7.4.3</ecNumber>
    </recommendedName>
    <alternativeName>
        <fullName>Adenylate monophosphate kinase 2</fullName>
    </alternativeName>
</protein>
<organism>
    <name type="scientific">Oryza sativa subsp. japonica</name>
    <name type="common">Rice</name>
    <dbReference type="NCBI Taxonomy" id="39947"/>
    <lineage>
        <taxon>Eukaryota</taxon>
        <taxon>Viridiplantae</taxon>
        <taxon>Streptophyta</taxon>
        <taxon>Embryophyta</taxon>
        <taxon>Tracheophyta</taxon>
        <taxon>Spermatophyta</taxon>
        <taxon>Magnoliopsida</taxon>
        <taxon>Liliopsida</taxon>
        <taxon>Poales</taxon>
        <taxon>Poaceae</taxon>
        <taxon>BOP clade</taxon>
        <taxon>Oryzoideae</taxon>
        <taxon>Oryzeae</taxon>
        <taxon>Oryzinae</taxon>
        <taxon>Oryza</taxon>
        <taxon>Oryza sativa</taxon>
    </lineage>
</organism>
<reference key="1">
    <citation type="journal article" date="2005" name="Nature">
        <title>The map-based sequence of the rice genome.</title>
        <authorList>
            <consortium name="International rice genome sequencing project (IRGSP)"/>
        </authorList>
    </citation>
    <scope>NUCLEOTIDE SEQUENCE [LARGE SCALE GENOMIC DNA]</scope>
    <source>
        <strain>cv. Nipponbare</strain>
    </source>
</reference>
<reference key="2">
    <citation type="journal article" date="2008" name="Nucleic Acids Res.">
        <title>The rice annotation project database (RAP-DB): 2008 update.</title>
        <authorList>
            <consortium name="The rice annotation project (RAP)"/>
        </authorList>
    </citation>
    <scope>GENOME REANNOTATION</scope>
    <source>
        <strain>cv. Nipponbare</strain>
    </source>
</reference>
<reference key="3">
    <citation type="journal article" date="2013" name="Rice">
        <title>Improvement of the Oryza sativa Nipponbare reference genome using next generation sequence and optical map data.</title>
        <authorList>
            <person name="Kawahara Y."/>
            <person name="de la Bastide M."/>
            <person name="Hamilton J.P."/>
            <person name="Kanamori H."/>
            <person name="McCombie W.R."/>
            <person name="Ouyang S."/>
            <person name="Schwartz D.C."/>
            <person name="Tanaka T."/>
            <person name="Wu J."/>
            <person name="Zhou S."/>
            <person name="Childs K.L."/>
            <person name="Davidson R.M."/>
            <person name="Lin H."/>
            <person name="Quesada-Ocampo L."/>
            <person name="Vaillancourt B."/>
            <person name="Sakai H."/>
            <person name="Lee S.S."/>
            <person name="Kim J."/>
            <person name="Numa H."/>
            <person name="Itoh T."/>
            <person name="Buell C.R."/>
            <person name="Matsumoto T."/>
        </authorList>
    </citation>
    <scope>GENOME REANNOTATION</scope>
    <source>
        <strain>cv. Nipponbare</strain>
    </source>
</reference>
<reference key="4">
    <citation type="journal article" date="2003" name="Science">
        <title>Collection, mapping, and annotation of over 28,000 cDNA clones from japonica rice.</title>
        <authorList>
            <consortium name="The rice full-length cDNA consortium"/>
        </authorList>
    </citation>
    <scope>NUCLEOTIDE SEQUENCE [LARGE SCALE MRNA]</scope>
    <source>
        <strain>cv. Nipponbare</strain>
    </source>
</reference>
<sequence length="290" mass="31817">MASSMAATATLSPPVLSAERPTVRGGLFLPPSPATSRSLRLQSARRCGISPATRKPRSLPRAAKVVVAVKADPLKVMIAGAPASGKGTQCELIKSKYGLVHISAGDLLRAEIAAGSENGKRAKEFMEKGQLVPDEIVVNMVKERLLQPDAQEKGWLLDGYPRSYSQAMALETLNIRPDIFILLDVPDELLVERVVGRRLDPVTGKIYHLKYSPPENEEIASRLTQRFDDTEEKVKLRLQTHYQNVESLLSIYEDVIVEVKGDALVDDVFAEIDKQLTSSLDKKTEMVASA</sequence>
<name>KAD2_ORYSJ</name>
<keyword id="KW-0067">ATP-binding</keyword>
<keyword id="KW-0150">Chloroplast</keyword>
<keyword id="KW-0418">Kinase</keyword>
<keyword id="KW-0547">Nucleotide-binding</keyword>
<keyword id="KW-0934">Plastid</keyword>
<keyword id="KW-1185">Reference proteome</keyword>
<keyword id="KW-0808">Transferase</keyword>
<keyword id="KW-0809">Transit peptide</keyword>
<feature type="transit peptide" description="Chloroplast" evidence="2">
    <location>
        <begin position="1"/>
        <end position="61"/>
    </location>
</feature>
<feature type="chain" id="PRO_0000430117" description="Probable adenylate kinase 2, chloroplastic">
    <location>
        <begin position="62"/>
        <end position="290"/>
    </location>
</feature>
<feature type="region of interest" description="Disordered" evidence="3">
    <location>
        <begin position="1"/>
        <end position="37"/>
    </location>
</feature>
<feature type="region of interest" description="NMP" evidence="1">
    <location>
        <begin position="103"/>
        <end position="132"/>
    </location>
</feature>
<feature type="region of interest" description="LID" evidence="1">
    <location>
        <begin position="196"/>
        <end position="229"/>
    </location>
</feature>
<feature type="compositionally biased region" description="Low complexity" evidence="3">
    <location>
        <begin position="1"/>
        <end position="10"/>
    </location>
</feature>
<feature type="binding site" evidence="1">
    <location>
        <begin position="83"/>
        <end position="88"/>
    </location>
    <ligand>
        <name>ATP</name>
        <dbReference type="ChEBI" id="CHEBI:30616"/>
    </ligand>
</feature>
<feature type="binding site" evidence="1">
    <location>
        <position position="109"/>
    </location>
    <ligand>
        <name>AMP</name>
        <dbReference type="ChEBI" id="CHEBI:456215"/>
    </ligand>
</feature>
<feature type="binding site" evidence="1">
    <location>
        <begin position="130"/>
        <end position="132"/>
    </location>
    <ligand>
        <name>AMP</name>
        <dbReference type="ChEBI" id="CHEBI:456215"/>
    </ligand>
</feature>
<feature type="binding site" evidence="1">
    <location>
        <begin position="159"/>
        <end position="162"/>
    </location>
    <ligand>
        <name>AMP</name>
        <dbReference type="ChEBI" id="CHEBI:456215"/>
    </ligand>
</feature>
<feature type="binding site" evidence="1">
    <location>
        <position position="166"/>
    </location>
    <ligand>
        <name>AMP</name>
        <dbReference type="ChEBI" id="CHEBI:456215"/>
    </ligand>
</feature>
<feature type="binding site" evidence="1">
    <location>
        <position position="193"/>
    </location>
    <ligand>
        <name>ATP</name>
        <dbReference type="ChEBI" id="CHEBI:30616"/>
    </ligand>
</feature>
<feature type="binding site" evidence="1">
    <location>
        <position position="197"/>
    </location>
    <ligand>
        <name>ATP</name>
        <dbReference type="ChEBI" id="CHEBI:30616"/>
    </ligand>
</feature>
<feature type="binding site" evidence="1">
    <location>
        <begin position="206"/>
        <end position="207"/>
    </location>
    <ligand>
        <name>ATP</name>
        <dbReference type="ChEBI" id="CHEBI:30616"/>
    </ligand>
</feature>
<feature type="binding site" evidence="1">
    <location>
        <position position="226"/>
    </location>
    <ligand>
        <name>AMP</name>
        <dbReference type="ChEBI" id="CHEBI:456215"/>
    </ligand>
</feature>
<feature type="binding site" evidence="1">
    <location>
        <position position="237"/>
    </location>
    <ligand>
        <name>AMP</name>
        <dbReference type="ChEBI" id="CHEBI:456215"/>
    </ligand>
</feature>
<accession>Q6ZC69</accession>
<accession>A0A0P0XAX0</accession>